<protein>
    <recommendedName>
        <fullName evidence="13">Cilia- and flagella-associated protein 53</fullName>
    </recommendedName>
    <alternativeName>
        <fullName evidence="13">Coiled-coil domain-containing protein 11</fullName>
    </alternativeName>
</protein>
<organism>
    <name type="scientific">Homo sapiens</name>
    <name type="common">Human</name>
    <dbReference type="NCBI Taxonomy" id="9606"/>
    <lineage>
        <taxon>Eukaryota</taxon>
        <taxon>Metazoa</taxon>
        <taxon>Chordata</taxon>
        <taxon>Craniata</taxon>
        <taxon>Vertebrata</taxon>
        <taxon>Euteleostomi</taxon>
        <taxon>Mammalia</taxon>
        <taxon>Eutheria</taxon>
        <taxon>Euarchontoglires</taxon>
        <taxon>Primates</taxon>
        <taxon>Haplorrhini</taxon>
        <taxon>Catarrhini</taxon>
        <taxon>Hominidae</taxon>
        <taxon>Homo</taxon>
    </lineage>
</organism>
<comment type="function">
    <text evidence="1 2 7 8 10">Microtubule inner protein (MIP) part of the dynein-decorated doublet microtubules (DMTs) in cilia axoneme, which is required for motile cilia beating (PubMed:36191189). Regulates motility patterns of both 9+0 and 9+2 motile cilia through differential localization and recruitment of axonemal dynein components (By similarity). Required for centriolar satellite integrity and non-motile cilium assembly (PubMed:26538025). Required for motile cilium formation (PubMed:26538025). Through its role in the beating of primary cilia, involved in the establishment of organ laterality during embryogenesis (PubMed:26531781). Required for sperm flagellum biogenesis and is essential for male fertility (By similarity).</text>
</comment>
<comment type="subunit">
    <text evidence="1 2 8">Microtubule inner protein component of sperm flagellar doublet microtubules (By similarity). Interacts with PIERCE1 and PIERCE2; the interactions link outer dynein arms docking complex (ODA-DC) to the internal microtubule inner proteins (MIP) in cilium axoneme (By similarity). Interacts with CCDC38 (By similarity). Interacts with CCDC42 and IFT88 (By similarity). Interacts with centriolar satellite proteins PIBF1/CEP90 and PCM1 (PubMed:26538025). Interacts with dyneins DNAIC1, DNAIC2 AND DNAH11 and with ODA-DC component ODAD4/TTC25 (By similarity).</text>
</comment>
<comment type="interaction">
    <interactant intactId="EBI-742422">
        <id>Q96M91</id>
    </interactant>
    <interactant intactId="EBI-947308">
        <id>Q9Y3M2</id>
        <label>CBY1</label>
    </interactant>
    <organismsDiffer>false</organismsDiffer>
    <experiments>4</experiments>
</comment>
<comment type="interaction">
    <interactant intactId="EBI-742422">
        <id>Q96M91</id>
    </interactant>
    <interactant intactId="EBI-10961624">
        <id>Q2TAC2-2</id>
        <label>CCDC57</label>
    </interactant>
    <organismsDiffer>false</organismsDiffer>
    <experiments>3</experiments>
</comment>
<comment type="interaction">
    <interactant intactId="EBI-742422">
        <id>Q96M91</id>
    </interactant>
    <interactant intactId="EBI-10175300">
        <id>Q8TD31-3</id>
        <label>CCHCR1</label>
    </interactant>
    <organismsDiffer>false</organismsDiffer>
    <experiments>6</experiments>
</comment>
<comment type="interaction">
    <interactant intactId="EBI-742422">
        <id>Q96M91</id>
    </interactant>
    <interactant intactId="EBI-395261">
        <id>P24863</id>
        <label>CCNC</label>
    </interactant>
    <organismsDiffer>false</organismsDiffer>
    <experiments>3</experiments>
</comment>
<comment type="interaction">
    <interactant intactId="EBI-742422">
        <id>Q96M91</id>
    </interactant>
    <interactant intactId="EBI-739624">
        <id>Q8NHQ1</id>
        <label>CEP70</label>
    </interactant>
    <organismsDiffer>false</organismsDiffer>
    <experiments>3</experiments>
</comment>
<comment type="interaction">
    <interactant intactId="EBI-742422">
        <id>Q96M91</id>
    </interactant>
    <interactant intactId="EBI-5453285">
        <id>Q2TBE0</id>
        <label>CWF19L2</label>
    </interactant>
    <organismsDiffer>false</organismsDiffer>
    <experiments>3</experiments>
</comment>
<comment type="interaction">
    <interactant intactId="EBI-742422">
        <id>Q96M91</id>
    </interactant>
    <interactant intactId="EBI-1052570">
        <id>O95995</id>
        <label>GAS8</label>
    </interactant>
    <organismsDiffer>false</organismsDiffer>
    <experiments>3</experiments>
</comment>
<comment type="interaction">
    <interactant intactId="EBI-742422">
        <id>Q96M91</id>
    </interactant>
    <interactant intactId="EBI-717919">
        <id>Q4V328</id>
        <label>GRIPAP1</label>
    </interactant>
    <organismsDiffer>false</organismsDiffer>
    <experiments>3</experiments>
</comment>
<comment type="interaction">
    <interactant intactId="EBI-742422">
        <id>Q96M91</id>
    </interactant>
    <interactant intactId="EBI-473886">
        <id>O00291</id>
        <label>HIP1</label>
    </interactant>
    <organismsDiffer>false</organismsDiffer>
    <experiments>3</experiments>
</comment>
<comment type="interaction">
    <interactant intactId="EBI-742422">
        <id>Q96M91</id>
    </interactant>
    <interactant intactId="EBI-740641">
        <id>Q9NP66</id>
        <label>HMG20A</label>
    </interactant>
    <organismsDiffer>false</organismsDiffer>
    <experiments>3</experiments>
</comment>
<comment type="interaction">
    <interactant intactId="EBI-742422">
        <id>Q96M91</id>
    </interactant>
    <interactant intactId="EBI-948001">
        <id>Q15323</id>
        <label>KRT31</label>
    </interactant>
    <organismsDiffer>false</organismsDiffer>
    <experiments>3</experiments>
</comment>
<comment type="interaction">
    <interactant intactId="EBI-742422">
        <id>Q96M91</id>
    </interactant>
    <interactant intactId="EBI-1047093">
        <id>O76011</id>
        <label>KRT34</label>
    </interactant>
    <organismsDiffer>false</organismsDiffer>
    <experiments>3</experiments>
</comment>
<comment type="interaction">
    <interactant intactId="EBI-742422">
        <id>Q96M91</id>
    </interactant>
    <interactant intactId="EBI-740738">
        <id>O95751</id>
        <label>LDOC1</label>
    </interactant>
    <organismsDiffer>false</organismsDiffer>
    <experiments>3</experiments>
</comment>
<comment type="interaction">
    <interactant intactId="EBI-742422">
        <id>Q96M91</id>
    </interactant>
    <interactant intactId="EBI-739546">
        <id>Q96PV6</id>
        <label>LENG8</label>
    </interactant>
    <organismsDiffer>false</organismsDiffer>
    <experiments>3</experiments>
</comment>
<comment type="interaction">
    <interactant intactId="EBI-742422">
        <id>Q96M91</id>
    </interactant>
    <interactant intactId="EBI-3906629">
        <id>P15173</id>
        <label>MYOG</label>
    </interactant>
    <organismsDiffer>false</organismsDiffer>
    <experiments>3</experiments>
</comment>
<comment type="interaction">
    <interactant intactId="EBI-742422">
        <id>Q96M91</id>
    </interactant>
    <interactant intactId="EBI-3921217">
        <id>Q9HBI0</id>
        <label>PARVG</label>
    </interactant>
    <organismsDiffer>false</organismsDiffer>
    <experiments>3</experiments>
</comment>
<comment type="interaction">
    <interactant intactId="EBI-742422">
        <id>Q96M91</id>
    </interactant>
    <interactant intactId="EBI-14066006">
        <id>Q4G0R1</id>
        <label>PIBF1</label>
    </interactant>
    <organismsDiffer>false</organismsDiffer>
    <experiments>3</experiments>
</comment>
<comment type="interaction">
    <interactant intactId="EBI-742422">
        <id>Q96M91</id>
    </interactant>
    <interactant intactId="EBI-302345">
        <id>Q8ND90</id>
        <label>PNMA1</label>
    </interactant>
    <organismsDiffer>false</organismsDiffer>
    <experiments>3</experiments>
</comment>
<comment type="interaction">
    <interactant intactId="EBI-742422">
        <id>Q96M91</id>
    </interactant>
    <interactant intactId="EBI-447043">
        <id>Q15276</id>
        <label>RABEP1</label>
    </interactant>
    <organismsDiffer>false</organismsDiffer>
    <experiments>3</experiments>
</comment>
<comment type="interaction">
    <interactant intactId="EBI-742422">
        <id>Q96M91</id>
    </interactant>
    <interactant intactId="EBI-747035">
        <id>Q9H788</id>
        <label>SH2D4A</label>
    </interactant>
    <organismsDiffer>false</organismsDiffer>
    <experiments>3</experiments>
</comment>
<comment type="interaction">
    <interactant intactId="EBI-742422">
        <id>Q96M91</id>
    </interactant>
    <interactant intactId="EBI-12018146">
        <id>Q8IYX1</id>
        <label>TBC1D21</label>
    </interactant>
    <organismsDiffer>false</organismsDiffer>
    <experiments>3</experiments>
</comment>
<comment type="interaction">
    <interactant intactId="EBI-742422">
        <id>Q96M91</id>
    </interactant>
    <interactant intactId="EBI-357849">
        <id>Q15025</id>
        <label>TNIP1</label>
    </interactant>
    <organismsDiffer>false</organismsDiffer>
    <experiments>3</experiments>
</comment>
<comment type="interaction">
    <interactant intactId="EBI-742422">
        <id>Q96M91</id>
    </interactant>
    <interactant intactId="EBI-740098">
        <id>P36406</id>
        <label>TRIM23</label>
    </interactant>
    <organismsDiffer>false</organismsDiffer>
    <experiments>3</experiments>
</comment>
<comment type="interaction">
    <interactant intactId="EBI-742422">
        <id>Q96M91</id>
    </interactant>
    <interactant intactId="EBI-2130429">
        <id>Q9BYV2</id>
        <label>TRIM54</label>
    </interactant>
    <organismsDiffer>false</organismsDiffer>
    <experiments>3</experiments>
</comment>
<comment type="interaction">
    <interactant intactId="EBI-742422">
        <id>Q96M91</id>
    </interactant>
    <interactant intactId="EBI-359793">
        <id>P40222</id>
        <label>TXLNA</label>
    </interactant>
    <organismsDiffer>false</organismsDiffer>
    <experiments>3</experiments>
</comment>
<comment type="interaction">
    <interactant intactId="EBI-742422">
        <id>Q96M91</id>
    </interactant>
    <interactant intactId="EBI-6116822">
        <id>Q8N3L3</id>
        <label>TXLNB</label>
    </interactant>
    <organismsDiffer>false</organismsDiffer>
    <experiments>3</experiments>
</comment>
<comment type="subcellular location">
    <subcellularLocation>
        <location evidence="6 10">Cytoplasm</location>
        <location evidence="6 10">Cytoskeleton</location>
        <location evidence="6 10">Cilium axoneme</location>
    </subcellularLocation>
    <subcellularLocation>
        <location evidence="2">Cytoplasm</location>
        <location evidence="2">Cytoskeleton</location>
        <location evidence="2">Flagellum axoneme</location>
    </subcellularLocation>
    <subcellularLocation>
        <location evidence="9">Cytoplasm</location>
        <location evidence="9">Cytoskeleton</location>
        <location evidence="9">Microtubule organizing center</location>
        <location evidence="9">Centrosome</location>
        <location evidence="9">Centriole</location>
    </subcellularLocation>
    <subcellularLocation>
        <location evidence="8">Cytoplasm</location>
        <location evidence="8">Cytoskeleton</location>
        <location evidence="8">Microtubule organizing center</location>
        <location evidence="8">Centrosome</location>
        <location evidence="8">Centriolar satellite</location>
    </subcellularLocation>
    <subcellularLocation>
        <location evidence="8">Cytoplasm</location>
        <location evidence="8">Cytoskeleton</location>
        <location evidence="8">Spindle pole</location>
    </subcellularLocation>
    <subcellularLocation>
        <location evidence="9">Cytoplasm</location>
        <location evidence="9">Cytoskeleton</location>
    </subcellularLocation>
    <subcellularLocation>
        <location evidence="11">Cell projection</location>
        <location evidence="11">Cilium</location>
    </subcellularLocation>
    <text evidence="2 8 9">In tracheal cell cilia, localizes prominently to both centriolar satellites and axonemes (By similarity). Tightly associated with microtubules in tracheal cilia (By similarity). In embryonic node cells, localizes to the base of the node cilia at the centriolar satellites and, to a lesser extent, to the cilium axoneme (By similarity). Localizes to centriolar satellites through G1, S phase, G2 and mitosis (PubMed:26538025). Enriched on the spindle poles in mitosis (PubMed:26538025). Relocalizes from the centriolar satellite to the ciliary transition zone upon ciliogenesis (PubMed:26538025). In skin fibroblast cells, locates predominantly to the centriole with much lower levels associated with the actin cytoskeleton (PubMed:28621423). Localizes to the sperm flagellum and manchette (By similarity).</text>
</comment>
<comment type="tissue specificity">
    <text evidence="5 6 9 10">Expressed in skin fibroblasts (at protein level) (PubMed:22577226, PubMed:28621423). Expressed in nasal respiratory epithelial cells (at protein level) (PubMed:25504577). Expressed in airway epithelial cells (PubMed:36191189).</text>
</comment>
<comment type="disease" evidence="5 6 7">
    <disease id="DI-03502">
        <name>Heterotaxy, visceral, 6, autosomal</name>
        <acronym>HTX6</acronym>
        <description>A form of visceral heterotaxy, a complex disorder due to disruption of the normal left-right asymmetry of the thoracoabdominal organs. Visceral heterotaxy or situs ambiguus results in randomization of the placement of visceral organs, including the heart, lungs, liver, spleen, and stomach. The organs are oriented randomly with respect to the left-right axis and with respect to one another. It can be associated with a variety of congenital defects including cardiac malformations. HTX6 clinical features are situs inversus totalis and severe complex cardiac malformations including unbalanced atrioventricular canal defects, transposition of the great arteries with severe pulmonary stenosis, right aortic arch, abnormal systemic venous return and total anomalous pulmonary venous drainage.</description>
        <dbReference type="MIM" id="614779"/>
    </disease>
    <text>The disease is caused by variants affecting the gene represented in this entry.</text>
</comment>
<comment type="similarity">
    <text evidence="12">Belongs to the CFAP53 family.</text>
</comment>
<comment type="sequence caution" evidence="12">
    <conflict type="erroneous initiation">
        <sequence resource="EMBL-CDS" id="BAB71418"/>
    </conflict>
    <text>Truncated N-terminus.</text>
</comment>
<name>CFA53_HUMAN</name>
<accession>Q96M91</accession>
<accession>B4DXT1</accession>
<reference key="1">
    <citation type="journal article" date="2004" name="Nat. Genet.">
        <title>Complete sequencing and characterization of 21,243 full-length human cDNAs.</title>
        <authorList>
            <person name="Ota T."/>
            <person name="Suzuki Y."/>
            <person name="Nishikawa T."/>
            <person name="Otsuki T."/>
            <person name="Sugiyama T."/>
            <person name="Irie R."/>
            <person name="Wakamatsu A."/>
            <person name="Hayashi K."/>
            <person name="Sato H."/>
            <person name="Nagai K."/>
            <person name="Kimura K."/>
            <person name="Makita H."/>
            <person name="Sekine M."/>
            <person name="Obayashi M."/>
            <person name="Nishi T."/>
            <person name="Shibahara T."/>
            <person name="Tanaka T."/>
            <person name="Ishii S."/>
            <person name="Yamamoto J."/>
            <person name="Saito K."/>
            <person name="Kawai Y."/>
            <person name="Isono Y."/>
            <person name="Nakamura Y."/>
            <person name="Nagahari K."/>
            <person name="Murakami K."/>
            <person name="Yasuda T."/>
            <person name="Iwayanagi T."/>
            <person name="Wagatsuma M."/>
            <person name="Shiratori A."/>
            <person name="Sudo H."/>
            <person name="Hosoiri T."/>
            <person name="Kaku Y."/>
            <person name="Kodaira H."/>
            <person name="Kondo H."/>
            <person name="Sugawara M."/>
            <person name="Takahashi M."/>
            <person name="Kanda K."/>
            <person name="Yokoi T."/>
            <person name="Furuya T."/>
            <person name="Kikkawa E."/>
            <person name="Omura Y."/>
            <person name="Abe K."/>
            <person name="Kamihara K."/>
            <person name="Katsuta N."/>
            <person name="Sato K."/>
            <person name="Tanikawa M."/>
            <person name="Yamazaki M."/>
            <person name="Ninomiya K."/>
            <person name="Ishibashi T."/>
            <person name="Yamashita H."/>
            <person name="Murakawa K."/>
            <person name="Fujimori K."/>
            <person name="Tanai H."/>
            <person name="Kimata M."/>
            <person name="Watanabe M."/>
            <person name="Hiraoka S."/>
            <person name="Chiba Y."/>
            <person name="Ishida S."/>
            <person name="Ono Y."/>
            <person name="Takiguchi S."/>
            <person name="Watanabe S."/>
            <person name="Yosida M."/>
            <person name="Hotuta T."/>
            <person name="Kusano J."/>
            <person name="Kanehori K."/>
            <person name="Takahashi-Fujii A."/>
            <person name="Hara H."/>
            <person name="Tanase T.-O."/>
            <person name="Nomura Y."/>
            <person name="Togiya S."/>
            <person name="Komai F."/>
            <person name="Hara R."/>
            <person name="Takeuchi K."/>
            <person name="Arita M."/>
            <person name="Imose N."/>
            <person name="Musashino K."/>
            <person name="Yuuki H."/>
            <person name="Oshima A."/>
            <person name="Sasaki N."/>
            <person name="Aotsuka S."/>
            <person name="Yoshikawa Y."/>
            <person name="Matsunawa H."/>
            <person name="Ichihara T."/>
            <person name="Shiohata N."/>
            <person name="Sano S."/>
            <person name="Moriya S."/>
            <person name="Momiyama H."/>
            <person name="Satoh N."/>
            <person name="Takami S."/>
            <person name="Terashima Y."/>
            <person name="Suzuki O."/>
            <person name="Nakagawa S."/>
            <person name="Senoh A."/>
            <person name="Mizoguchi H."/>
            <person name="Goto Y."/>
            <person name="Shimizu F."/>
            <person name="Wakebe H."/>
            <person name="Hishigaki H."/>
            <person name="Watanabe T."/>
            <person name="Sugiyama A."/>
            <person name="Takemoto M."/>
            <person name="Kawakami B."/>
            <person name="Yamazaki M."/>
            <person name="Watanabe K."/>
            <person name="Kumagai A."/>
            <person name="Itakura S."/>
            <person name="Fukuzumi Y."/>
            <person name="Fujimori Y."/>
            <person name="Komiyama M."/>
            <person name="Tashiro H."/>
            <person name="Tanigami A."/>
            <person name="Fujiwara T."/>
            <person name="Ono T."/>
            <person name="Yamada K."/>
            <person name="Fujii Y."/>
            <person name="Ozaki K."/>
            <person name="Hirao M."/>
            <person name="Ohmori Y."/>
            <person name="Kawabata A."/>
            <person name="Hikiji T."/>
            <person name="Kobatake N."/>
            <person name="Inagaki H."/>
            <person name="Ikema Y."/>
            <person name="Okamoto S."/>
            <person name="Okitani R."/>
            <person name="Kawakami T."/>
            <person name="Noguchi S."/>
            <person name="Itoh T."/>
            <person name="Shigeta K."/>
            <person name="Senba T."/>
            <person name="Matsumura K."/>
            <person name="Nakajima Y."/>
            <person name="Mizuno T."/>
            <person name="Morinaga M."/>
            <person name="Sasaki M."/>
            <person name="Togashi T."/>
            <person name="Oyama M."/>
            <person name="Hata H."/>
            <person name="Watanabe M."/>
            <person name="Komatsu T."/>
            <person name="Mizushima-Sugano J."/>
            <person name="Satoh T."/>
            <person name="Shirai Y."/>
            <person name="Takahashi Y."/>
            <person name="Nakagawa K."/>
            <person name="Okumura K."/>
            <person name="Nagase T."/>
            <person name="Nomura N."/>
            <person name="Kikuchi H."/>
            <person name="Masuho Y."/>
            <person name="Yamashita R."/>
            <person name="Nakai K."/>
            <person name="Yada T."/>
            <person name="Nakamura Y."/>
            <person name="Ohara O."/>
            <person name="Isogai T."/>
            <person name="Sugano S."/>
        </authorList>
    </citation>
    <scope>NUCLEOTIDE SEQUENCE [LARGE SCALE MRNA]</scope>
    <scope>VARIANT LYS-294</scope>
    <source>
        <tissue>Testis</tissue>
    </source>
</reference>
<reference key="2">
    <citation type="journal article" date="2004" name="Genome Res.">
        <title>The status, quality, and expansion of the NIH full-length cDNA project: the Mammalian Gene Collection (MGC).</title>
        <authorList>
            <consortium name="The MGC Project Team"/>
        </authorList>
    </citation>
    <scope>NUCLEOTIDE SEQUENCE [LARGE SCALE MRNA]</scope>
    <source>
        <tissue>Testis</tissue>
    </source>
</reference>
<reference key="3">
    <citation type="journal article" date="2016" name="Mol. Biol. Cell">
        <title>Ccdc11 is a novel centriolar satellite protein essential for ciliogenesis and establishment of left-right asymmetry.</title>
        <authorList>
            <person name="Silva E."/>
            <person name="Betleja E."/>
            <person name="John E."/>
            <person name="Spear P."/>
            <person name="Moresco J.J."/>
            <person name="Zhang S."/>
            <person name="Yates J.R. III"/>
            <person name="Mitchell B.J."/>
            <person name="Mahjoub M.R."/>
        </authorList>
    </citation>
    <scope>FUNCTION</scope>
    <scope>INTERACTION WITH PIBF1 AND PCM1</scope>
    <scope>SUBCELLULAR LOCATION</scope>
</reference>
<reference key="4">
    <citation type="journal article" date="2017" name="Int. J. Dev. Biol.">
        <title>Roles of the cilium-associated gene CCDC11 in left-right patterning and in laterality disorders in humans.</title>
        <authorList>
            <person name="Gur M."/>
            <person name="Cohen E.B."/>
            <person name="Genin O."/>
            <person name="Fainsod A."/>
            <person name="Perles Z."/>
            <person name="Cinnamon Y."/>
        </authorList>
    </citation>
    <scope>SUBCELLULAR LOCATION</scope>
    <scope>TISSUE SPECIFICITY</scope>
</reference>
<reference key="5">
    <citation type="journal article" date="2012" name="J. Med. Genet.">
        <title>A human laterality disorder associated with recessive CCDC11 mutation.</title>
        <authorList>
            <person name="Perles Z."/>
            <person name="Cinnamon Y."/>
            <person name="Ta-Shma A."/>
            <person name="Shaag A."/>
            <person name="Einbinder T."/>
            <person name="Rein A.J."/>
            <person name="Elpeleg O."/>
        </authorList>
    </citation>
    <scope>INVOLVEMENT IN HTX6</scope>
    <scope>TISSUE SPECIFICITY</scope>
    <scope>SUBCELLULAR LOCATION</scope>
</reference>
<reference key="6">
    <citation type="journal article" date="2024" name="Nat. Commun.">
        <title>Uncovering structural themes across cilia microtubule inner proteins with implications for human cilia function.</title>
        <authorList>
            <person name="Andersen J.S."/>
            <person name="Vijayakumaran A."/>
            <person name="Godbehere C."/>
            <person name="Lorentzen E."/>
            <person name="Mennella V."/>
            <person name="Schou K.B."/>
        </authorList>
    </citation>
    <scope>SUBCELLULAR LOCATION</scope>
</reference>
<reference key="7">
    <citation type="journal article" date="2015" name="Hum. Mutat.">
        <title>Mutations in CCDC11, which encodes a coiled-coil containing ciliary protein, causes situs inversus due to dysmotility of monocilia in the left-right organizer.</title>
        <authorList>
            <person name="Narasimhan V."/>
            <person name="Hjeij R."/>
            <person name="Vij S."/>
            <person name="Loges N.T."/>
            <person name="Wallmeier J."/>
            <person name="Koerner-Rettberg C."/>
            <person name="Werner C."/>
            <person name="Thamilselvam S.K."/>
            <person name="Boey A."/>
            <person name="Choksi S.P."/>
            <person name="Pennekamp P."/>
            <person name="Roy S."/>
            <person name="Omran H."/>
        </authorList>
    </citation>
    <scope>VARIANT HTX6 41-ARG--PRO-514 DEL</scope>
    <scope>SUBCELLULAR LOCATION</scope>
    <scope>TISSUE SPECIFICITY</scope>
</reference>
<reference key="8">
    <citation type="journal article" date="2016" name="Hum. Mutat.">
        <title>A zebrafish loss-of-function model for human CFAP53 mutations reveals its specific role in laterality organ function.</title>
        <authorList>
            <person name="Noel E.S."/>
            <person name="Momenah T.S."/>
            <person name="Al-Dagriri K."/>
            <person name="Al-Suwaid A."/>
            <person name="Al-Shahrani S."/>
            <person name="Jiang H."/>
            <person name="Willekers S."/>
            <person name="Oostveen Y.Y."/>
            <person name="Chocron S."/>
            <person name="Postma A.V."/>
            <person name="Bhuiyan Z.A."/>
            <person name="Bakkers J."/>
        </authorList>
    </citation>
    <scope>VARIANT HTX6 GLY-158</scope>
    <scope>FUNCTION</scope>
</reference>
<reference evidence="14" key="9">
    <citation type="journal article" date="2022" name="Proc. Natl. Acad. Sci. U.S.A.">
        <title>SPACA9 is a lumenal protein of human ciliary singlet and doublet microtubules.</title>
        <authorList>
            <person name="Gui M."/>
            <person name="Croft J.T."/>
            <person name="Zabeo D."/>
            <person name="Acharya V."/>
            <person name="Kollman J.M."/>
            <person name="Burgoyne T."/>
            <person name="Hoog J.L."/>
            <person name="Brown A."/>
        </authorList>
    </citation>
    <scope>STRUCTURE BY ELECTRON MICROSCOPY (3.60 ANGSTROMS)</scope>
    <scope>FUNCTION</scope>
    <scope>SUBCELLULAR LOCATION</scope>
    <scope>TISSUE SPECIFICITY</scope>
</reference>
<proteinExistence type="evidence at protein level"/>
<dbReference type="EMBL" id="AK057305">
    <property type="protein sequence ID" value="BAB71418.1"/>
    <property type="status" value="ALT_INIT"/>
    <property type="molecule type" value="mRNA"/>
</dbReference>
<dbReference type="EMBL" id="AK302114">
    <property type="protein sequence ID" value="BAG63493.1"/>
    <property type="molecule type" value="mRNA"/>
</dbReference>
<dbReference type="EMBL" id="BC030606">
    <property type="protein sequence ID" value="AAH30606.2"/>
    <property type="molecule type" value="mRNA"/>
</dbReference>
<dbReference type="CCDS" id="CCDS11940.2"/>
<dbReference type="RefSeq" id="NP_659457.2">
    <property type="nucleotide sequence ID" value="NM_145020.5"/>
</dbReference>
<dbReference type="PDB" id="7UNG">
    <property type="method" value="EM"/>
    <property type="resolution" value="3.60 A"/>
    <property type="chains" value="3/4=1-514"/>
</dbReference>
<dbReference type="PDB" id="8J07">
    <property type="method" value="EM"/>
    <property type="resolution" value="4.10 A"/>
    <property type="chains" value="1R/1S/1T=1-514"/>
</dbReference>
<dbReference type="PDBsum" id="7UNG"/>
<dbReference type="PDBsum" id="8J07"/>
<dbReference type="EMDB" id="EMD-26624"/>
<dbReference type="EMDB" id="EMD-35888"/>
<dbReference type="SMR" id="Q96M91"/>
<dbReference type="BioGRID" id="128633">
    <property type="interactions" value="38"/>
</dbReference>
<dbReference type="FunCoup" id="Q96M91">
    <property type="interactions" value="4"/>
</dbReference>
<dbReference type="IntAct" id="Q96M91">
    <property type="interactions" value="28"/>
</dbReference>
<dbReference type="STRING" id="9606.ENSP00000381553"/>
<dbReference type="GlyGen" id="Q96M91">
    <property type="glycosylation" value="2 sites, 1 O-linked glycan (1 site)"/>
</dbReference>
<dbReference type="iPTMnet" id="Q96M91"/>
<dbReference type="PhosphoSitePlus" id="Q96M91"/>
<dbReference type="BioMuta" id="CFAP53"/>
<dbReference type="DMDM" id="118572626"/>
<dbReference type="jPOST" id="Q96M91"/>
<dbReference type="MassIVE" id="Q96M91"/>
<dbReference type="PaxDb" id="9606-ENSP00000381553"/>
<dbReference type="PeptideAtlas" id="Q96M91"/>
<dbReference type="ProteomicsDB" id="77314"/>
<dbReference type="Antibodypedia" id="22662">
    <property type="antibodies" value="76 antibodies from 15 providers"/>
</dbReference>
<dbReference type="DNASU" id="220136"/>
<dbReference type="Ensembl" id="ENST00000398545.5">
    <property type="protein sequence ID" value="ENSP00000381553.3"/>
    <property type="gene ID" value="ENSG00000172361.6"/>
</dbReference>
<dbReference type="GeneID" id="220136"/>
<dbReference type="KEGG" id="hsa:220136"/>
<dbReference type="MANE-Select" id="ENST00000398545.5">
    <property type="protein sequence ID" value="ENSP00000381553.3"/>
    <property type="RefSeq nucleotide sequence ID" value="NM_145020.5"/>
    <property type="RefSeq protein sequence ID" value="NP_659457.2"/>
</dbReference>
<dbReference type="UCSC" id="uc002lee.4">
    <property type="organism name" value="human"/>
</dbReference>
<dbReference type="AGR" id="HGNC:26530"/>
<dbReference type="CTD" id="220136"/>
<dbReference type="DisGeNET" id="220136"/>
<dbReference type="GeneCards" id="CFAP53"/>
<dbReference type="HGNC" id="HGNC:26530">
    <property type="gene designation" value="CFAP53"/>
</dbReference>
<dbReference type="HPA" id="ENSG00000172361">
    <property type="expression patterns" value="Group enriched (choroid plexus, fallopian tube, testis)"/>
</dbReference>
<dbReference type="MalaCards" id="CFAP53"/>
<dbReference type="MIM" id="614759">
    <property type="type" value="gene"/>
</dbReference>
<dbReference type="MIM" id="614779">
    <property type="type" value="phenotype"/>
</dbReference>
<dbReference type="neXtProt" id="NX_Q96M91"/>
<dbReference type="OpenTargets" id="ENSG00000172361"/>
<dbReference type="Orphanet" id="157769">
    <property type="disease" value="Situs ambiguus"/>
</dbReference>
<dbReference type="Orphanet" id="101063">
    <property type="disease" value="Situs inversus totalis"/>
</dbReference>
<dbReference type="PharmGKB" id="PA134960690"/>
<dbReference type="VEuPathDB" id="HostDB:ENSG00000172361"/>
<dbReference type="eggNOG" id="ENOG502QRDR">
    <property type="taxonomic scope" value="Eukaryota"/>
</dbReference>
<dbReference type="GeneTree" id="ENSGT01120000271938"/>
<dbReference type="HOGENOM" id="CLU_036489_1_0_1"/>
<dbReference type="InParanoid" id="Q96M91"/>
<dbReference type="OMA" id="IQAQHND"/>
<dbReference type="OrthoDB" id="75950at2759"/>
<dbReference type="PAN-GO" id="Q96M91">
    <property type="GO annotations" value="0 GO annotations based on evolutionary models"/>
</dbReference>
<dbReference type="PhylomeDB" id="Q96M91"/>
<dbReference type="TreeFam" id="TF329393"/>
<dbReference type="PathwayCommons" id="Q96M91"/>
<dbReference type="SignaLink" id="Q96M91"/>
<dbReference type="SIGNOR" id="Q96M91"/>
<dbReference type="BioGRID-ORCS" id="220136">
    <property type="hits" value="16 hits in 1157 CRISPR screens"/>
</dbReference>
<dbReference type="ChiTaRS" id="CFAP53">
    <property type="organism name" value="human"/>
</dbReference>
<dbReference type="GenomeRNAi" id="220136"/>
<dbReference type="Pharos" id="Q96M91">
    <property type="development level" value="Tbio"/>
</dbReference>
<dbReference type="PRO" id="PR:Q96M91"/>
<dbReference type="Proteomes" id="UP000005640">
    <property type="component" value="Chromosome 18"/>
</dbReference>
<dbReference type="RNAct" id="Q96M91">
    <property type="molecule type" value="protein"/>
</dbReference>
<dbReference type="Bgee" id="ENSG00000172361">
    <property type="expression patterns" value="Expressed in bronchial epithelial cell and 130 other cell types or tissues"/>
</dbReference>
<dbReference type="GO" id="GO:0160111">
    <property type="term" value="C:axonemal A tubule inner sheath"/>
    <property type="evidence" value="ECO:0000250"/>
    <property type="project" value="UniProtKB"/>
</dbReference>
<dbReference type="GO" id="GO:0005879">
    <property type="term" value="C:axonemal microtubule"/>
    <property type="evidence" value="ECO:0000314"/>
    <property type="project" value="UniProtKB"/>
</dbReference>
<dbReference type="GO" id="GO:0005930">
    <property type="term" value="C:axoneme"/>
    <property type="evidence" value="ECO:0000314"/>
    <property type="project" value="UniProtKB"/>
</dbReference>
<dbReference type="GO" id="GO:0034451">
    <property type="term" value="C:centriolar satellite"/>
    <property type="evidence" value="ECO:0000314"/>
    <property type="project" value="UniProtKB"/>
</dbReference>
<dbReference type="GO" id="GO:0005814">
    <property type="term" value="C:centriole"/>
    <property type="evidence" value="ECO:0007669"/>
    <property type="project" value="UniProtKB-SubCell"/>
</dbReference>
<dbReference type="GO" id="GO:0035869">
    <property type="term" value="C:ciliary transition zone"/>
    <property type="evidence" value="ECO:0000314"/>
    <property type="project" value="UniProtKB"/>
</dbReference>
<dbReference type="GO" id="GO:0005929">
    <property type="term" value="C:cilium"/>
    <property type="evidence" value="ECO:0000314"/>
    <property type="project" value="UniProtKB"/>
</dbReference>
<dbReference type="GO" id="GO:0005576">
    <property type="term" value="C:extracellular region"/>
    <property type="evidence" value="ECO:0007669"/>
    <property type="project" value="GOC"/>
</dbReference>
<dbReference type="GO" id="GO:0002177">
    <property type="term" value="C:manchette"/>
    <property type="evidence" value="ECO:0000250"/>
    <property type="project" value="UniProtKB"/>
</dbReference>
<dbReference type="GO" id="GO:0036126">
    <property type="term" value="C:sperm flagellum"/>
    <property type="evidence" value="ECO:0000250"/>
    <property type="project" value="UniProtKB"/>
</dbReference>
<dbReference type="GO" id="GO:0000922">
    <property type="term" value="C:spindle pole"/>
    <property type="evidence" value="ECO:0000314"/>
    <property type="project" value="UniProtKB"/>
</dbReference>
<dbReference type="GO" id="GO:0060271">
    <property type="term" value="P:cilium assembly"/>
    <property type="evidence" value="ECO:0000315"/>
    <property type="project" value="UniProtKB"/>
</dbReference>
<dbReference type="GO" id="GO:0003341">
    <property type="term" value="P:cilium movement"/>
    <property type="evidence" value="ECO:0000250"/>
    <property type="project" value="UniProtKB"/>
</dbReference>
<dbReference type="GO" id="GO:0007368">
    <property type="term" value="P:determination of left/right symmetry"/>
    <property type="evidence" value="ECO:0000315"/>
    <property type="project" value="UniProtKB"/>
</dbReference>
<dbReference type="GO" id="GO:0060287">
    <property type="term" value="P:epithelial cilium movement involved in determination of left/right asymmetry"/>
    <property type="evidence" value="ECO:0000250"/>
    <property type="project" value="UniProtKB"/>
</dbReference>
<dbReference type="GO" id="GO:0030317">
    <property type="term" value="P:flagellated sperm motility"/>
    <property type="evidence" value="ECO:0000250"/>
    <property type="project" value="UniProtKB"/>
</dbReference>
<dbReference type="GO" id="GO:1905198">
    <property type="term" value="P:manchette assembly"/>
    <property type="evidence" value="ECO:0000250"/>
    <property type="project" value="UniProtKB"/>
</dbReference>
<dbReference type="GO" id="GO:0120316">
    <property type="term" value="P:sperm flagellum assembly"/>
    <property type="evidence" value="ECO:0000250"/>
    <property type="project" value="UniProtKB"/>
</dbReference>
<dbReference type="InterPro" id="IPR043596">
    <property type="entry name" value="CFAP53/TCHP"/>
</dbReference>
<dbReference type="InterPro" id="IPR043597">
    <property type="entry name" value="TPH_dom"/>
</dbReference>
<dbReference type="PANTHER" id="PTHR31183:SF1">
    <property type="entry name" value="CILIA- AND FLAGELLA-ASSOCIATED PROTEIN 53"/>
    <property type="match status" value="1"/>
</dbReference>
<dbReference type="PANTHER" id="PTHR31183">
    <property type="entry name" value="TRICHOPLEIN KERATIN FILAMENT-BINDING PROTEIN FAMILY MEMBER"/>
    <property type="match status" value="1"/>
</dbReference>
<dbReference type="Pfam" id="PF13868">
    <property type="entry name" value="TPH"/>
    <property type="match status" value="1"/>
</dbReference>
<sequence>MYSQRFGTVQREVKGPTPKVVIVRSKPPKGQGAEHHLERIRRSHQKHNAILASIKSSERDRLKAEWDQHNDCKILDSLVRARIKDAVQGFIINIEERRNKLRELLALEENEYFTEMQLKKETIEEKKDRMREKTKLLKEKNEKERQDFVAEKLDQQFRERCEELRVELLSIHQKKVCEERKAQIAFNEELSRQKLVEEQMFSKLWEEDRLAKEKREAQEARRQKELMENTRLGLNAQITSIKAQRQATQLLKEEEARLVESNNAQIKHENEQDMLKKQKAKQETRTILQKALQERIEHIQQEYRDEQDLNMKLVQRALQDLQEEADKKKQKREDMIREQKIYHKYLAQRREEEKAQEKEFDRILEEDKAKKLAEKDKELRLEKEARRQLVDEVMCTRKLQVQEKLQREAKEQEERAMEQKHINESLKELNCEEKENFARRQRLAQEYRKQLQMQIAYQQQSQEAEKEEKRREFEAGVAANKMCLDKVQEVLSTHQVLPQNIHPMRKACPSKLPP</sequence>
<gene>
    <name evidence="13" type="primary">CFAP53</name>
    <name evidence="13" type="synonym">CCDC11</name>
</gene>
<keyword id="KW-0002">3D-structure</keyword>
<keyword id="KW-0966">Cell projection</keyword>
<keyword id="KW-1186">Ciliopathy</keyword>
<keyword id="KW-0969">Cilium</keyword>
<keyword id="KW-0970">Cilium biogenesis/degradation</keyword>
<keyword id="KW-0175">Coiled coil</keyword>
<keyword id="KW-0963">Cytoplasm</keyword>
<keyword id="KW-0206">Cytoskeleton</keyword>
<keyword id="KW-0217">Developmental protein</keyword>
<keyword id="KW-0221">Differentiation</keyword>
<keyword id="KW-0225">Disease variant</keyword>
<keyword id="KW-0282">Flagellum</keyword>
<keyword id="KW-1056">Heterotaxy</keyword>
<keyword id="KW-1267">Proteomics identification</keyword>
<keyword id="KW-1185">Reference proteome</keyword>
<keyword id="KW-0744">Spermatogenesis</keyword>
<feature type="chain" id="PRO_0000089407" description="Cilia- and flagella-associated protein 53">
    <location>
        <begin position="1"/>
        <end position="514"/>
    </location>
</feature>
<feature type="coiled-coil region" evidence="3">
    <location>
        <begin position="91"/>
        <end position="148"/>
    </location>
</feature>
<feature type="coiled-coil region" evidence="3">
    <location>
        <begin position="203"/>
        <end position="474"/>
    </location>
</feature>
<feature type="sequence variant" id="VAR_089056" description="In HTX6; uncertain significance; no overt effects on the structure or function of respiratory cilia." evidence="6">
    <location>
        <begin position="41"/>
        <end position="514"/>
    </location>
</feature>
<feature type="sequence variant" id="VAR_077590" description="In HTX6; uncertain significance; dbSNP:rs886037751." evidence="7">
    <original>R</original>
    <variation>G</variation>
    <location>
        <position position="158"/>
    </location>
</feature>
<feature type="sequence variant" id="VAR_050746" description="In dbSNP:rs12607385.">
    <original>R</original>
    <variation>C</variation>
    <location>
        <position position="231"/>
    </location>
</feature>
<feature type="sequence variant" id="VAR_050747" description="In dbSNP:rs35193847." evidence="4">
    <original>E</original>
    <variation>K</variation>
    <location>
        <position position="294"/>
    </location>
</feature>
<evidence type="ECO:0000250" key="1">
    <source>
        <dbReference type="UniProtKB" id="F1N7G5"/>
    </source>
</evidence>
<evidence type="ECO:0000250" key="2">
    <source>
        <dbReference type="UniProtKB" id="Q9D439"/>
    </source>
</evidence>
<evidence type="ECO:0000255" key="3"/>
<evidence type="ECO:0000269" key="4">
    <source>
    </source>
</evidence>
<evidence type="ECO:0000269" key="5">
    <source>
    </source>
</evidence>
<evidence type="ECO:0000269" key="6">
    <source>
    </source>
</evidence>
<evidence type="ECO:0000269" key="7">
    <source>
    </source>
</evidence>
<evidence type="ECO:0000269" key="8">
    <source>
    </source>
</evidence>
<evidence type="ECO:0000269" key="9">
    <source>
    </source>
</evidence>
<evidence type="ECO:0000269" key="10">
    <source>
    </source>
</evidence>
<evidence type="ECO:0000269" key="11">
    <source>
    </source>
</evidence>
<evidence type="ECO:0000305" key="12"/>
<evidence type="ECO:0000312" key="13">
    <source>
        <dbReference type="HGNC" id="HGNC:26530"/>
    </source>
</evidence>
<evidence type="ECO:0007744" key="14">
    <source>
        <dbReference type="PDB" id="7UNG"/>
    </source>
</evidence>